<gene>
    <name type="primary">Gtf2a2</name>
</gene>
<dbReference type="EMBL" id="AF000944">
    <property type="protein sequence ID" value="AAB58717.1"/>
    <property type="molecule type" value="mRNA"/>
</dbReference>
<dbReference type="RefSeq" id="NP_001399115.1">
    <property type="nucleotide sequence ID" value="NM_001412186.1"/>
</dbReference>
<dbReference type="RefSeq" id="NP_445797.1">
    <property type="nucleotide sequence ID" value="NM_053345.2"/>
</dbReference>
<dbReference type="RefSeq" id="XP_006243442.1">
    <property type="nucleotide sequence ID" value="XM_006243380.3"/>
</dbReference>
<dbReference type="RefSeq" id="XP_008773362.1">
    <property type="nucleotide sequence ID" value="XM_008775140.2"/>
</dbReference>
<dbReference type="RefSeq" id="XP_038938134.1">
    <property type="nucleotide sequence ID" value="XM_039082206.2"/>
</dbReference>
<dbReference type="SMR" id="O08950"/>
<dbReference type="FunCoup" id="O08950">
    <property type="interactions" value="2892"/>
</dbReference>
<dbReference type="STRING" id="10116.ENSRNOP00000068825"/>
<dbReference type="PhosphoSitePlus" id="O08950"/>
<dbReference type="PaxDb" id="10116-ENSRNOP00000014706"/>
<dbReference type="Ensembl" id="ENSRNOT00000085496.2">
    <property type="protein sequence ID" value="ENSRNOP00000068825.1"/>
    <property type="gene ID" value="ENSRNOG00000056701.2"/>
</dbReference>
<dbReference type="GeneID" id="83828"/>
<dbReference type="KEGG" id="rno:83828"/>
<dbReference type="UCSC" id="RGD:620720">
    <property type="organism name" value="rat"/>
</dbReference>
<dbReference type="AGR" id="RGD:620720"/>
<dbReference type="CTD" id="2958"/>
<dbReference type="RGD" id="620720">
    <property type="gene designation" value="Gtf2a2"/>
</dbReference>
<dbReference type="eggNOG" id="KOG3463">
    <property type="taxonomic scope" value="Eukaryota"/>
</dbReference>
<dbReference type="GeneTree" id="ENSGT00390000014572"/>
<dbReference type="HOGENOM" id="CLU_112964_2_1_1"/>
<dbReference type="InParanoid" id="O08950"/>
<dbReference type="OMA" id="QYYELYR"/>
<dbReference type="OrthoDB" id="586585at2759"/>
<dbReference type="PhylomeDB" id="O08950"/>
<dbReference type="TreeFam" id="TF315131"/>
<dbReference type="Reactome" id="R-RNO-674695">
    <property type="pathway name" value="RNA Polymerase II Pre-transcription Events"/>
</dbReference>
<dbReference type="Reactome" id="R-RNO-6807505">
    <property type="pathway name" value="RNA polymerase II transcribes snRNA genes"/>
</dbReference>
<dbReference type="Reactome" id="R-RNO-73776">
    <property type="pathway name" value="RNA Polymerase II Promoter Escape"/>
</dbReference>
<dbReference type="Reactome" id="R-RNO-73779">
    <property type="pathway name" value="RNA Polymerase II Transcription Pre-Initiation And Promoter Opening"/>
</dbReference>
<dbReference type="Reactome" id="R-RNO-75953">
    <property type="pathway name" value="RNA Polymerase II Transcription Initiation"/>
</dbReference>
<dbReference type="Reactome" id="R-RNO-76042">
    <property type="pathway name" value="RNA Polymerase II Transcription Initiation And Promoter Clearance"/>
</dbReference>
<dbReference type="Reactome" id="R-RNO-9018519">
    <property type="pathway name" value="Estrogen-dependent gene expression"/>
</dbReference>
<dbReference type="PRO" id="PR:O08950"/>
<dbReference type="Proteomes" id="UP000002494">
    <property type="component" value="Chromosome 8"/>
</dbReference>
<dbReference type="Bgee" id="ENSRNOG00000056701">
    <property type="expression patterns" value="Expressed in ovary and 19 other cell types or tissues"/>
</dbReference>
<dbReference type="ExpressionAtlas" id="O08950">
    <property type="expression patterns" value="baseline"/>
</dbReference>
<dbReference type="GO" id="GO:0005634">
    <property type="term" value="C:nucleus"/>
    <property type="evidence" value="ECO:0000266"/>
    <property type="project" value="RGD"/>
</dbReference>
<dbReference type="GO" id="GO:0005672">
    <property type="term" value="C:transcription factor TFIIA complex"/>
    <property type="evidence" value="ECO:0000266"/>
    <property type="project" value="RGD"/>
</dbReference>
<dbReference type="GO" id="GO:0005669">
    <property type="term" value="C:transcription factor TFIID complex"/>
    <property type="evidence" value="ECO:0000266"/>
    <property type="project" value="RGD"/>
</dbReference>
<dbReference type="GO" id="GO:0046982">
    <property type="term" value="F:protein heterodimerization activity"/>
    <property type="evidence" value="ECO:0000266"/>
    <property type="project" value="RGD"/>
</dbReference>
<dbReference type="GO" id="GO:0042803">
    <property type="term" value="F:protein homodimerization activity"/>
    <property type="evidence" value="ECO:0000266"/>
    <property type="project" value="RGD"/>
</dbReference>
<dbReference type="GO" id="GO:0016251">
    <property type="term" value="F:RNA polymerase II general transcription initiation factor activity"/>
    <property type="evidence" value="ECO:0000266"/>
    <property type="project" value="RGD"/>
</dbReference>
<dbReference type="GO" id="GO:0001091">
    <property type="term" value="F:RNA polymerase II general transcription initiation factor binding"/>
    <property type="evidence" value="ECO:0000266"/>
    <property type="project" value="RGD"/>
</dbReference>
<dbReference type="GO" id="GO:0061629">
    <property type="term" value="F:RNA polymerase II-specific DNA-binding transcription factor binding"/>
    <property type="evidence" value="ECO:0000266"/>
    <property type="project" value="RGD"/>
</dbReference>
<dbReference type="GO" id="GO:0017025">
    <property type="term" value="F:TBP-class protein binding"/>
    <property type="evidence" value="ECO:0000266"/>
    <property type="project" value="RGD"/>
</dbReference>
<dbReference type="GO" id="GO:0045944">
    <property type="term" value="P:positive regulation of transcription by RNA polymerase II"/>
    <property type="evidence" value="ECO:0000315"/>
    <property type="project" value="RGD"/>
</dbReference>
<dbReference type="GO" id="GO:0060261">
    <property type="term" value="P:positive regulation of transcription initiation by RNA polymerase II"/>
    <property type="evidence" value="ECO:0000266"/>
    <property type="project" value="RGD"/>
</dbReference>
<dbReference type="GO" id="GO:0051123">
    <property type="term" value="P:RNA polymerase II preinitiation complex assembly"/>
    <property type="evidence" value="ECO:0000266"/>
    <property type="project" value="RGD"/>
</dbReference>
<dbReference type="GO" id="GO:0006366">
    <property type="term" value="P:transcription by RNA polymerase II"/>
    <property type="evidence" value="ECO:0000266"/>
    <property type="project" value="RGD"/>
</dbReference>
<dbReference type="GO" id="GO:0006367">
    <property type="term" value="P:transcription initiation at RNA polymerase II promoter"/>
    <property type="evidence" value="ECO:0000266"/>
    <property type="project" value="RGD"/>
</dbReference>
<dbReference type="CDD" id="cd10014">
    <property type="entry name" value="TFIIA_gamma_C"/>
    <property type="match status" value="1"/>
</dbReference>
<dbReference type="CDD" id="cd10145">
    <property type="entry name" value="TFIIA_gamma_N"/>
    <property type="match status" value="1"/>
</dbReference>
<dbReference type="FunFam" id="1.10.287.190:FF:000001">
    <property type="entry name" value="Transcription initiation factor IIA subunit 2"/>
    <property type="match status" value="1"/>
</dbReference>
<dbReference type="FunFam" id="2.30.18.10:FF:000001">
    <property type="entry name" value="Transcription initiation factor IIA subunit 2"/>
    <property type="match status" value="1"/>
</dbReference>
<dbReference type="Gene3D" id="2.30.18.10">
    <property type="entry name" value="Transcription factor IIA (TFIIA), beta-barrel domain"/>
    <property type="match status" value="1"/>
</dbReference>
<dbReference type="Gene3D" id="1.10.287.190">
    <property type="entry name" value="Transcription factor IIA gamma subunit, alpha-helical domain"/>
    <property type="match status" value="1"/>
</dbReference>
<dbReference type="InterPro" id="IPR009083">
    <property type="entry name" value="TFIIA_a-hlx"/>
</dbReference>
<dbReference type="InterPro" id="IPR009088">
    <property type="entry name" value="TFIIA_b-brl"/>
</dbReference>
<dbReference type="InterPro" id="IPR003194">
    <property type="entry name" value="TFIIA_gsu"/>
</dbReference>
<dbReference type="InterPro" id="IPR015871">
    <property type="entry name" value="TFIIA_gsu_C"/>
</dbReference>
<dbReference type="InterPro" id="IPR015872">
    <property type="entry name" value="TFIIA_gsu_N"/>
</dbReference>
<dbReference type="PANTHER" id="PTHR10966">
    <property type="entry name" value="TRANSCRIPTION INITIATION FACTOR IIA SUBUNIT 2"/>
    <property type="match status" value="1"/>
</dbReference>
<dbReference type="Pfam" id="PF02751">
    <property type="entry name" value="TFIIA_gamma_C"/>
    <property type="match status" value="1"/>
</dbReference>
<dbReference type="Pfam" id="PF02268">
    <property type="entry name" value="TFIIA_gamma_N"/>
    <property type="match status" value="1"/>
</dbReference>
<dbReference type="PIRSF" id="PIRSF009415">
    <property type="entry name" value="Hum_TFIIA_gamma"/>
    <property type="match status" value="1"/>
</dbReference>
<dbReference type="SUPFAM" id="SSF47396">
    <property type="entry name" value="Transcription factor IIA (TFIIA), alpha-helical domain"/>
    <property type="match status" value="1"/>
</dbReference>
<dbReference type="SUPFAM" id="SSF50784">
    <property type="entry name" value="Transcription factor IIA (TFIIA), beta-barrel domain"/>
    <property type="match status" value="1"/>
</dbReference>
<reference key="1">
    <citation type="submission" date="1997-04" db="EMBL/GenBank/DDBJ databases">
        <authorList>
            <person name="Upadhyaya A.B."/>
            <person name="Dejong J."/>
        </authorList>
    </citation>
    <scope>NUCLEOTIDE SEQUENCE [MRNA]</scope>
    <source>
        <strain>Sprague-Dawley</strain>
    </source>
</reference>
<accession>O08950</accession>
<proteinExistence type="inferred from homology"/>
<sequence length="109" mass="12473">MAYQLYRNTTLGNSLQESLDELIQSQQITPQLALQVLLQFDKAINSALAQRVRNRVNFRGSLNTYRFCDNVWTFVLNDVEFREVTELIKVDKVKIVACDGKNTGSNTTE</sequence>
<comment type="function">
    <text evidence="1">TFIIA is a component of the transcription machinery of RNA polymerase II and plays an important role in transcriptional activation. TFIIA in a complex with TBP mediates transcriptional activity (By similarity).</text>
</comment>
<comment type="subunit">
    <text evidence="2 3">TFIIA is a heterodimer of the large unprocessed subunit 1 and a small subunit gamma (By similarity). It was originally believed to be a heterotrimer of an alpha (p35), a beta (p19) and a gamma subunit (p12) (By similarity). Interacts with NCOA6 general coactivator. TFIIA forms a complex with TBP. Interacts with HSF1 (via transactivation domain). Part of TBP-based Pol II pre-initiation complex (PIC), in which Pol II core assembles with general transcription factors and other specific initiation factors including GTF2E1, GTF2E2, GTF2F1, GTF2F2, TCEA1, ERCC2, ERCC3, GTF2H2, GTF2H3, GTF2H4, GTF2H5, GTF2A1, GTF2A2, GTF2B and TBP; this large multi-subunit PIC complex mediates DNA unwinding and targets Pol II core to the transcription start site where the first phosphodiester bond forms (By similarity).</text>
</comment>
<comment type="subcellular location">
    <subcellularLocation>
        <location>Nucleus</location>
    </subcellularLocation>
</comment>
<comment type="similarity">
    <text evidence="4">Belongs to the TFIIA subunit 2 family.</text>
</comment>
<keyword id="KW-0539">Nucleus</keyword>
<keyword id="KW-1185">Reference proteome</keyword>
<keyword id="KW-0804">Transcription</keyword>
<keyword id="KW-0805">Transcription regulation</keyword>
<feature type="chain" id="PRO_0000194044" description="Transcription initiation factor IIA subunit 2">
    <location>
        <begin position="1"/>
        <end position="109"/>
    </location>
</feature>
<protein>
    <recommendedName>
        <fullName>Transcription initiation factor IIA subunit 2</fullName>
    </recommendedName>
    <alternativeName>
        <fullName>General transcription factor IIA subunit 2</fullName>
    </alternativeName>
    <alternativeName>
        <fullName>Transcription initiation factor IIA gamma chain</fullName>
        <shortName>TFIIA-gamma</shortName>
    </alternativeName>
</protein>
<organism>
    <name type="scientific">Rattus norvegicus</name>
    <name type="common">Rat</name>
    <dbReference type="NCBI Taxonomy" id="10116"/>
    <lineage>
        <taxon>Eukaryota</taxon>
        <taxon>Metazoa</taxon>
        <taxon>Chordata</taxon>
        <taxon>Craniata</taxon>
        <taxon>Vertebrata</taxon>
        <taxon>Euteleostomi</taxon>
        <taxon>Mammalia</taxon>
        <taxon>Eutheria</taxon>
        <taxon>Euarchontoglires</taxon>
        <taxon>Glires</taxon>
        <taxon>Rodentia</taxon>
        <taxon>Myomorpha</taxon>
        <taxon>Muroidea</taxon>
        <taxon>Muridae</taxon>
        <taxon>Murinae</taxon>
        <taxon>Rattus</taxon>
    </lineage>
</organism>
<evidence type="ECO:0000250" key="1"/>
<evidence type="ECO:0000250" key="2">
    <source>
        <dbReference type="UniProtKB" id="P52656"/>
    </source>
</evidence>
<evidence type="ECO:0000250" key="3">
    <source>
        <dbReference type="UniProtKB" id="P52657"/>
    </source>
</evidence>
<evidence type="ECO:0000305" key="4"/>
<name>T2AG_RAT</name>